<dbReference type="EMBL" id="BA000039">
    <property type="protein sequence ID" value="BAC07986.1"/>
    <property type="molecule type" value="Genomic_DNA"/>
</dbReference>
<dbReference type="RefSeq" id="NP_681224.1">
    <property type="nucleotide sequence ID" value="NC_004113.1"/>
</dbReference>
<dbReference type="RefSeq" id="WP_011056289.1">
    <property type="nucleotide sequence ID" value="NC_004113.1"/>
</dbReference>
<dbReference type="SMR" id="Q8DLP4"/>
<dbReference type="STRING" id="197221.gene:10747023"/>
<dbReference type="EnsemblBacteria" id="BAC07986">
    <property type="protein sequence ID" value="BAC07986"/>
    <property type="gene ID" value="BAC07986"/>
</dbReference>
<dbReference type="KEGG" id="tel:tlr0434"/>
<dbReference type="PATRIC" id="fig|197221.4.peg.458"/>
<dbReference type="eggNOG" id="COG0712">
    <property type="taxonomic scope" value="Bacteria"/>
</dbReference>
<dbReference type="Proteomes" id="UP000000440">
    <property type="component" value="Chromosome"/>
</dbReference>
<dbReference type="GO" id="GO:0031676">
    <property type="term" value="C:plasma membrane-derived thylakoid membrane"/>
    <property type="evidence" value="ECO:0007669"/>
    <property type="project" value="UniProtKB-SubCell"/>
</dbReference>
<dbReference type="GO" id="GO:0045259">
    <property type="term" value="C:proton-transporting ATP synthase complex"/>
    <property type="evidence" value="ECO:0007669"/>
    <property type="project" value="UniProtKB-KW"/>
</dbReference>
<dbReference type="GO" id="GO:0046933">
    <property type="term" value="F:proton-transporting ATP synthase activity, rotational mechanism"/>
    <property type="evidence" value="ECO:0007669"/>
    <property type="project" value="UniProtKB-UniRule"/>
</dbReference>
<dbReference type="Gene3D" id="1.10.520.20">
    <property type="entry name" value="N-terminal domain of the delta subunit of the F1F0-ATP synthase"/>
    <property type="match status" value="1"/>
</dbReference>
<dbReference type="HAMAP" id="MF_01416">
    <property type="entry name" value="ATP_synth_delta_bact"/>
    <property type="match status" value="1"/>
</dbReference>
<dbReference type="InterPro" id="IPR026015">
    <property type="entry name" value="ATP_synth_OSCP/delta_N_sf"/>
</dbReference>
<dbReference type="InterPro" id="IPR000711">
    <property type="entry name" value="ATPase_OSCP/dsu"/>
</dbReference>
<dbReference type="NCBIfam" id="TIGR01145">
    <property type="entry name" value="ATP_synt_delta"/>
    <property type="match status" value="1"/>
</dbReference>
<dbReference type="PANTHER" id="PTHR11910">
    <property type="entry name" value="ATP SYNTHASE DELTA CHAIN"/>
    <property type="match status" value="1"/>
</dbReference>
<dbReference type="Pfam" id="PF00213">
    <property type="entry name" value="OSCP"/>
    <property type="match status" value="1"/>
</dbReference>
<dbReference type="PRINTS" id="PR00125">
    <property type="entry name" value="ATPASEDELTA"/>
</dbReference>
<dbReference type="SUPFAM" id="SSF47928">
    <property type="entry name" value="N-terminal domain of the delta subunit of the F1F0-ATP synthase"/>
    <property type="match status" value="1"/>
</dbReference>
<feature type="initiator methionine" description="Removed" evidence="3">
    <location>
        <position position="1"/>
    </location>
</feature>
<feature type="chain" id="PRO_1000184823" description="ATP synthase subunit delta">
    <location>
        <begin position="2"/>
        <end position="185"/>
    </location>
</feature>
<evidence type="ECO:0000255" key="1">
    <source>
        <dbReference type="HAMAP-Rule" id="MF_01416"/>
    </source>
</evidence>
<evidence type="ECO:0000269" key="2">
    <source>
    </source>
</evidence>
<evidence type="ECO:0000269" key="3">
    <source>
    </source>
</evidence>
<comment type="function">
    <text evidence="1 2">F(1)F(0) ATP synthase produces ATP from ADP in the presence of a proton or sodium gradient. F-type ATPases consist of two structural domains, F(1) containing the extramembraneous catalytic core and F(0) containing the membrane proton channel, linked together by a central stalk and a peripheral stalk. During catalysis, ATP synthesis in the catalytic domain of F(1) is coupled via a rotary mechanism of the central stalk subunits to proton translocation.</text>
</comment>
<comment type="function">
    <text evidence="1">This protein is part of the stalk that links CF(0) to CF(1). It either transmits conformational changes from CF(0) to CF(1) or is implicated in proton conduction.</text>
</comment>
<comment type="function">
    <text evidence="2">The complex from the organism is particularly stable to disruption and remains functional after 6 hrs at 55 degrees Celsius.</text>
</comment>
<comment type="subunit">
    <text evidence="1 2 3">F-type ATPases have 2 components, F(1) - the catalytic core - and F(0) - the membrane proton channel. F(1) has five subunits: alpha(3), beta(3), gamma(1), delta(1), epsilon(1). CF(0) has four main subunits: a(1), b(1), b'(1) and c(10-14). The alpha and beta chains form an alternating ring which encloses part of the gamma chain. F(1) is attached to F(0) by a central stalk formed by the gamma and epsilon chains, while a peripheral stalk is formed by the delta, b and b' chains.</text>
</comment>
<comment type="subcellular location">
    <subcellularLocation>
        <location evidence="1 2 3">Cellular thylakoid membrane</location>
        <topology evidence="1">Peripheral membrane protein</topology>
    </subcellularLocation>
</comment>
<comment type="mass spectrometry"/>
<comment type="mass spectrometry">
    <text>May be active form.</text>
</comment>
<comment type="similarity">
    <text evidence="1">Belongs to the ATPase delta chain family.</text>
</comment>
<sequence>MMQTTVRGEVVEPYAEALLSLAQTHNLIDQFQQDTQLMVELVASSGELQQFLANPLIKPEAKKNVLRQLTVDKVHGYFLNFLMLLVDRRRINFLSSICEHYRALVRKLRNVALAEVTSAVELNDDQRRAVVEKVKTMTGAADVELVTACDPELIGGVVIKVGSQIFDASLRGQLRRLSVTLAQAT</sequence>
<gene>
    <name evidence="1" type="primary">atpH</name>
    <name evidence="1" type="synonym">atpD</name>
    <name type="ordered locus">tlr0434</name>
</gene>
<protein>
    <recommendedName>
        <fullName evidence="1">ATP synthase subunit delta</fullName>
    </recommendedName>
    <alternativeName>
        <fullName evidence="1">ATP synthase F(1) sector subunit delta</fullName>
    </alternativeName>
    <alternativeName>
        <fullName evidence="1">F-type ATPase subunit delta</fullName>
        <shortName evidence="1">F-ATPase subunit delta</shortName>
    </alternativeName>
</protein>
<proteinExistence type="evidence at protein level"/>
<name>ATPD_THEVB</name>
<keyword id="KW-0066">ATP synthesis</keyword>
<keyword id="KW-0139">CF(1)</keyword>
<keyword id="KW-0375">Hydrogen ion transport</keyword>
<keyword id="KW-0406">Ion transport</keyword>
<keyword id="KW-0472">Membrane</keyword>
<keyword id="KW-1185">Reference proteome</keyword>
<keyword id="KW-0793">Thylakoid</keyword>
<keyword id="KW-0813">Transport</keyword>
<reference key="1">
    <citation type="journal article" date="2002" name="DNA Res.">
        <title>Complete genome structure of the thermophilic cyanobacterium Thermosynechococcus elongatus BP-1.</title>
        <authorList>
            <person name="Nakamura Y."/>
            <person name="Kaneko T."/>
            <person name="Sato S."/>
            <person name="Ikeuchi M."/>
            <person name="Katoh H."/>
            <person name="Sasamoto S."/>
            <person name="Watanabe A."/>
            <person name="Iriguchi M."/>
            <person name="Kawashima K."/>
            <person name="Kimura T."/>
            <person name="Kishida Y."/>
            <person name="Kiyokawa C."/>
            <person name="Kohara M."/>
            <person name="Matsumoto M."/>
            <person name="Matsuno A."/>
            <person name="Nakazaki N."/>
            <person name="Shimpo S."/>
            <person name="Sugimoto M."/>
            <person name="Takeuchi C."/>
            <person name="Yamada M."/>
            <person name="Tabata S."/>
        </authorList>
    </citation>
    <scope>NUCLEOTIDE SEQUENCE [LARGE SCALE GENOMIC DNA]</scope>
    <source>
        <strain>NIES-2133 / IAM M-273 / BP-1</strain>
    </source>
</reference>
<reference key="2">
    <citation type="journal article" date="2008" name="Biochim. Biophys. Acta">
        <title>Remarkable stability of the proton translocating F1FO-ATP synthase from the thermophilic cyanobacterium Thermosynechococcus elongatus BP-1.</title>
        <authorList>
            <person name="Suhai T."/>
            <person name="Dencher N.A."/>
            <person name="Poetsch A."/>
            <person name="Seelert H."/>
        </authorList>
    </citation>
    <scope>FUNCTION</scope>
    <scope>MASS SPECTROMETRY</scope>
    <scope>SUBUNIT</scope>
    <scope>SUBCELLULAR LOCATION</scope>
    <source>
        <strain>NIES-2133 / IAM M-273 / BP-1</strain>
    </source>
</reference>
<reference key="3">
    <citation type="journal article" date="2010" name="J. Biol. Chem.">
        <title>Crystal structure of monomeric photosystem II from Thermosynechococcus elongatus at 3.6 A resolution.</title>
        <authorList>
            <person name="Broser M."/>
            <person name="Gabdulkhakov A."/>
            <person name="Kern J."/>
            <person name="Guskov A."/>
            <person name="Muh F."/>
            <person name="Saenger W."/>
            <person name="Zouni A."/>
        </authorList>
    </citation>
    <scope>SUBUNIT</scope>
    <scope>SUBCELLULAR LOCATION</scope>
    <scope>MASS SPECTROMETRY</scope>
    <source>
        <strain>NIES-2133 / IAM M-273 / BP-1</strain>
    </source>
</reference>
<accession>Q8DLP4</accession>
<organism>
    <name type="scientific">Thermosynechococcus vestitus (strain NIES-2133 / IAM M-273 / BP-1)</name>
    <dbReference type="NCBI Taxonomy" id="197221"/>
    <lineage>
        <taxon>Bacteria</taxon>
        <taxon>Bacillati</taxon>
        <taxon>Cyanobacteriota</taxon>
        <taxon>Cyanophyceae</taxon>
        <taxon>Acaryochloridales</taxon>
        <taxon>Thermosynechococcaceae</taxon>
        <taxon>Thermosynechococcus</taxon>
    </lineage>
</organism>